<name>CMTB_PSEPU</name>
<evidence type="ECO:0000250" key="1"/>
<evidence type="ECO:0000255" key="2">
    <source>
        <dbReference type="PROSITE-ProRule" id="PRU10001"/>
    </source>
</evidence>
<evidence type="ECO:0000305" key="3"/>
<gene>
    <name type="primary">cmtB</name>
</gene>
<sequence length="259" mass="27310">MSTLSRNALPLEGQVAVVTGGAHGIGLGIVERLLGLGARVTASDIDESGLSLLCERLAAKHADAIAVHAADLSEEQGAQGLHRAAVERFGSVQILVNCAGGGVIRPFLEHTPETLKATIDRNLWTALWCSRVFLPDMLARQYGRIINIGADSVRNGLPDHAAYNAAKGGMHGLTTGLAREFARQGVTVNTVAPCAVNTEVWVRIKNANPELAQRFLDVIPMGRVGEIEEVASMVGYLAQPEAAFVTGQVISVNGGSTML</sequence>
<feature type="chain" id="PRO_0000054550" description="2,3-dihydroxy-2,3-dihydro-p-cumate dehydrogenase">
    <location>
        <begin position="1"/>
        <end position="259"/>
    </location>
</feature>
<feature type="active site" description="Proton acceptor" evidence="2">
    <location>
        <position position="163"/>
    </location>
</feature>
<feature type="binding site" evidence="1">
    <location>
        <begin position="18"/>
        <end position="42"/>
    </location>
    <ligand>
        <name>NAD(+)</name>
        <dbReference type="ChEBI" id="CHEBI:57540"/>
    </ligand>
</feature>
<keyword id="KW-0058">Aromatic hydrocarbons catabolism</keyword>
<keyword id="KW-0520">NAD</keyword>
<keyword id="KW-0560">Oxidoreductase</keyword>
<comment type="catalytic activity">
    <reaction>
        <text>(2R,3S)-2,3-dihydroxy-2,3-dihydro-p-cumate + NAD(+) = 2,3-dihydroxy-p-cumate + NADH + H(+)</text>
        <dbReference type="Rhea" id="RHEA:23772"/>
        <dbReference type="ChEBI" id="CHEBI:15378"/>
        <dbReference type="ChEBI" id="CHEBI:36647"/>
        <dbReference type="ChEBI" id="CHEBI:57540"/>
        <dbReference type="ChEBI" id="CHEBI:57945"/>
        <dbReference type="ChEBI" id="CHEBI:58420"/>
        <dbReference type="EC" id="1.3.1.58"/>
    </reaction>
</comment>
<comment type="pathway">
    <text>Aromatic compound metabolism; p-cumate degradation; acetaldehyde and pyruvate from p-cumate: step 2/7.</text>
</comment>
<comment type="similarity">
    <text evidence="3">Belongs to the short-chain dehydrogenases/reductases (SDR) family.</text>
</comment>
<organism>
    <name type="scientific">Pseudomonas putida</name>
    <name type="common">Arthrobacter siderocapsulatus</name>
    <dbReference type="NCBI Taxonomy" id="303"/>
    <lineage>
        <taxon>Bacteria</taxon>
        <taxon>Pseudomonadati</taxon>
        <taxon>Pseudomonadota</taxon>
        <taxon>Gammaproteobacteria</taxon>
        <taxon>Pseudomonadales</taxon>
        <taxon>Pseudomonadaceae</taxon>
        <taxon>Pseudomonas</taxon>
    </lineage>
</organism>
<dbReference type="EC" id="1.3.1.58"/>
<dbReference type="EMBL" id="AB042508">
    <property type="protein sequence ID" value="BAB17774.1"/>
    <property type="molecule type" value="Genomic_DNA"/>
</dbReference>
<dbReference type="RefSeq" id="WP_012052614.1">
    <property type="nucleotide sequence ID" value="NZ_NHBC01000013.1"/>
</dbReference>
<dbReference type="SMR" id="P0C622"/>
<dbReference type="UniPathway" id="UPA00937">
    <property type="reaction ID" value="UER00902"/>
</dbReference>
<dbReference type="GO" id="GO:0018511">
    <property type="term" value="F:2,3-dihydroxy-2,3-dihydro-p-cumate dehydrogenase activity"/>
    <property type="evidence" value="ECO:0007669"/>
    <property type="project" value="UniProtKB-EC"/>
</dbReference>
<dbReference type="GO" id="GO:0009056">
    <property type="term" value="P:catabolic process"/>
    <property type="evidence" value="ECO:0007669"/>
    <property type="project" value="UniProtKB-KW"/>
</dbReference>
<dbReference type="CDD" id="cd08937">
    <property type="entry name" value="DHB_DH-like_SDR_c"/>
    <property type="match status" value="1"/>
</dbReference>
<dbReference type="FunFam" id="3.40.50.720:FF:000173">
    <property type="entry name" value="3-oxoacyl-[acyl-carrier protein] reductase"/>
    <property type="match status" value="1"/>
</dbReference>
<dbReference type="Gene3D" id="3.40.50.720">
    <property type="entry name" value="NAD(P)-binding Rossmann-like Domain"/>
    <property type="match status" value="1"/>
</dbReference>
<dbReference type="InterPro" id="IPR036291">
    <property type="entry name" value="NAD(P)-bd_dom_sf"/>
</dbReference>
<dbReference type="InterPro" id="IPR020904">
    <property type="entry name" value="Sc_DH/Rdtase_CS"/>
</dbReference>
<dbReference type="InterPro" id="IPR002347">
    <property type="entry name" value="SDR_fam"/>
</dbReference>
<dbReference type="PANTHER" id="PTHR43639">
    <property type="entry name" value="OXIDOREDUCTASE, SHORT-CHAIN DEHYDROGENASE/REDUCTASE FAMILY (AFU_ORTHOLOGUE AFUA_5G02870)"/>
    <property type="match status" value="1"/>
</dbReference>
<dbReference type="PANTHER" id="PTHR43639:SF1">
    <property type="entry name" value="SHORT-CHAIN DEHYDROGENASE_REDUCTASE FAMILY PROTEIN"/>
    <property type="match status" value="1"/>
</dbReference>
<dbReference type="Pfam" id="PF13561">
    <property type="entry name" value="adh_short_C2"/>
    <property type="match status" value="1"/>
</dbReference>
<dbReference type="PRINTS" id="PR00081">
    <property type="entry name" value="GDHRDH"/>
</dbReference>
<dbReference type="PRINTS" id="PR00080">
    <property type="entry name" value="SDRFAMILY"/>
</dbReference>
<dbReference type="SUPFAM" id="SSF51735">
    <property type="entry name" value="NAD(P)-binding Rossmann-fold domains"/>
    <property type="match status" value="1"/>
</dbReference>
<dbReference type="PROSITE" id="PS00061">
    <property type="entry name" value="ADH_SHORT"/>
    <property type="match status" value="1"/>
</dbReference>
<accession>P0C622</accession>
<accession>Q51977</accession>
<protein>
    <recommendedName>
        <fullName>2,3-dihydroxy-2,3-dihydro-p-cumate dehydrogenase</fullName>
        <ecNumber>1.3.1.58</ecNumber>
    </recommendedName>
    <alternativeName>
        <fullName>Biphenyl-2,3-dihydro-2,3-diol dehydrogenase</fullName>
    </alternativeName>
</protein>
<proteinExistence type="inferred from homology"/>
<reference key="1">
    <citation type="journal article" date="2001" name="Microbiology">
        <title>Pseudomonas putida CE2010 can degrade biphenyl by a mosaic pathway encoded by the tod operon and cmtE, which are identical to those of P. putida F1 except for a single base difference in the operator-promoter region of the cmt operon.</title>
        <authorList>
            <person name="Ohta Y."/>
            <person name="Maeda M."/>
            <person name="Kudo T."/>
        </authorList>
    </citation>
    <scope>NUCLEOTIDE SEQUENCE [GENOMIC DNA]</scope>
    <source>
        <strain>CE2010</strain>
    </source>
</reference>